<protein>
    <recommendedName>
        <fullName evidence="1">tRNA (guanine-N(7)-)-methyltransferase non-catalytic subunit WDR4</fullName>
    </recommendedName>
    <alternativeName>
        <fullName evidence="26">Protein Wuho homolog</fullName>
        <shortName evidence="26">hWH</shortName>
    </alternativeName>
    <alternativeName>
        <fullName evidence="1">WD repeat-containing protein 4</fullName>
    </alternativeName>
</protein>
<proteinExistence type="evidence at protein level"/>
<organism>
    <name type="scientific">Homo sapiens</name>
    <name type="common">Human</name>
    <dbReference type="NCBI Taxonomy" id="9606"/>
    <lineage>
        <taxon>Eukaryota</taxon>
        <taxon>Metazoa</taxon>
        <taxon>Chordata</taxon>
        <taxon>Craniata</taxon>
        <taxon>Vertebrata</taxon>
        <taxon>Euteleostomi</taxon>
        <taxon>Mammalia</taxon>
        <taxon>Eutheria</taxon>
        <taxon>Euarchontoglires</taxon>
        <taxon>Primates</taxon>
        <taxon>Haplorrhini</taxon>
        <taxon>Catarrhini</taxon>
        <taxon>Hominidae</taxon>
        <taxon>Homo</taxon>
    </lineage>
</organism>
<keyword id="KW-0002">3D-structure</keyword>
<keyword id="KW-0007">Acetylation</keyword>
<keyword id="KW-0025">Alternative splicing</keyword>
<keyword id="KW-0158">Chromosome</keyword>
<keyword id="KW-0903">Direct protein sequencing</keyword>
<keyword id="KW-0225">Disease variant</keyword>
<keyword id="KW-0227">DNA damage</keyword>
<keyword id="KW-0887">Epilepsy</keyword>
<keyword id="KW-0991">Intellectual disability</keyword>
<keyword id="KW-0539">Nucleus</keyword>
<keyword id="KW-0597">Phosphoprotein</keyword>
<keyword id="KW-1267">Proteomics identification</keyword>
<keyword id="KW-1185">Reference proteome</keyword>
<keyword id="KW-0677">Repeat</keyword>
<keyword id="KW-0819">tRNA processing</keyword>
<keyword id="KW-0853">WD repeat</keyword>
<accession>P57081</accession>
<accession>A8KA58</accession>
<accession>B2RCA3</accession>
<accession>B4DNQ7</accession>
<accession>D3DSK3</accession>
<accession>Q9BVM5</accession>
<accession>Q9HCR3</accession>
<dbReference type="EMBL" id="AJ243912">
    <property type="protein sequence ID" value="CAB93144.1"/>
    <property type="molecule type" value="mRNA"/>
</dbReference>
<dbReference type="EMBL" id="AJ243913">
    <property type="protein sequence ID" value="CAB93145.1"/>
    <property type="molecule type" value="mRNA"/>
</dbReference>
<dbReference type="EMBL" id="AK056343">
    <property type="protein sequence ID" value="BAG51684.1"/>
    <property type="molecule type" value="mRNA"/>
</dbReference>
<dbReference type="EMBL" id="AK292923">
    <property type="protein sequence ID" value="BAF85612.1"/>
    <property type="molecule type" value="mRNA"/>
</dbReference>
<dbReference type="EMBL" id="AK298015">
    <property type="protein sequence ID" value="BAG60319.1"/>
    <property type="molecule type" value="mRNA"/>
</dbReference>
<dbReference type="EMBL" id="AK315008">
    <property type="protein sequence ID" value="BAG37500.1"/>
    <property type="molecule type" value="mRNA"/>
</dbReference>
<dbReference type="EMBL" id="AB039887">
    <property type="protein sequence ID" value="BAB13726.1"/>
    <property type="molecule type" value="Genomic_DNA"/>
</dbReference>
<dbReference type="EMBL" id="AP001629">
    <property type="status" value="NOT_ANNOTATED_CDS"/>
    <property type="molecule type" value="Genomic_DNA"/>
</dbReference>
<dbReference type="EMBL" id="CH471079">
    <property type="protein sequence ID" value="EAX09528.1"/>
    <property type="molecule type" value="Genomic_DNA"/>
</dbReference>
<dbReference type="EMBL" id="CH471079">
    <property type="protein sequence ID" value="EAX09529.1"/>
    <property type="molecule type" value="Genomic_DNA"/>
</dbReference>
<dbReference type="EMBL" id="BC001074">
    <property type="protein sequence ID" value="AAH01074.1"/>
    <property type="molecule type" value="mRNA"/>
</dbReference>
<dbReference type="EMBL" id="BC006341">
    <property type="protein sequence ID" value="AAH06341.1"/>
    <property type="molecule type" value="mRNA"/>
</dbReference>
<dbReference type="CCDS" id="CCDS13691.1">
    <molecule id="P57081-1"/>
</dbReference>
<dbReference type="RefSeq" id="NP_001247403.1">
    <molecule id="P57081-2"/>
    <property type="nucleotide sequence ID" value="NM_001260474.2"/>
</dbReference>
<dbReference type="RefSeq" id="NP_001247404.1">
    <molecule id="P57081-3"/>
    <property type="nucleotide sequence ID" value="NM_001260475.2"/>
</dbReference>
<dbReference type="RefSeq" id="NP_001247405.1">
    <molecule id="P57081-3"/>
    <property type="nucleotide sequence ID" value="NM_001260476.2"/>
</dbReference>
<dbReference type="RefSeq" id="NP_001247406.1">
    <molecule id="P57081-3"/>
    <property type="nucleotide sequence ID" value="NM_001260477.2"/>
</dbReference>
<dbReference type="RefSeq" id="NP_061139.2">
    <molecule id="P57081-1"/>
    <property type="nucleotide sequence ID" value="NM_018669.5"/>
</dbReference>
<dbReference type="RefSeq" id="NP_387510.1">
    <molecule id="P57081-1"/>
    <property type="nucleotide sequence ID" value="NM_033661.5"/>
</dbReference>
<dbReference type="RefSeq" id="XP_024307815.1">
    <molecule id="P57081-3"/>
    <property type="nucleotide sequence ID" value="XM_024452047.2"/>
</dbReference>
<dbReference type="RefSeq" id="XP_024307816.1">
    <molecule id="P57081-3"/>
    <property type="nucleotide sequence ID" value="XM_024452048.2"/>
</dbReference>
<dbReference type="PDB" id="7U20">
    <property type="method" value="X-ray"/>
    <property type="resolution" value="3.10 A"/>
    <property type="chains" value="B=1-412"/>
</dbReference>
<dbReference type="PDB" id="8CTH">
    <property type="method" value="EM"/>
    <property type="resolution" value="3.30 A"/>
    <property type="chains" value="B=1-412"/>
</dbReference>
<dbReference type="PDB" id="8CTI">
    <property type="method" value="EM"/>
    <property type="resolution" value="3.60 A"/>
    <property type="chains" value="B=1-412"/>
</dbReference>
<dbReference type="PDB" id="8D58">
    <property type="method" value="X-ray"/>
    <property type="resolution" value="2.47 A"/>
    <property type="chains" value="B=1-389"/>
</dbReference>
<dbReference type="PDB" id="8D9K">
    <property type="method" value="EM"/>
    <property type="resolution" value="3.72 A"/>
    <property type="chains" value="B=1-389"/>
</dbReference>
<dbReference type="PDB" id="8D9L">
    <property type="method" value="EM"/>
    <property type="resolution" value="4.04 A"/>
    <property type="chains" value="B=1-389"/>
</dbReference>
<dbReference type="PDB" id="8EG0">
    <property type="method" value="EM"/>
    <property type="resolution" value="3.53 A"/>
    <property type="chains" value="B=1-389"/>
</dbReference>
<dbReference type="PDB" id="8H0N">
    <property type="method" value="X-ray"/>
    <property type="resolution" value="1.80 A"/>
    <property type="chains" value="A=1-367"/>
</dbReference>
<dbReference type="PDBsum" id="7U20"/>
<dbReference type="PDBsum" id="8CTH"/>
<dbReference type="PDBsum" id="8CTI"/>
<dbReference type="PDBsum" id="8D58"/>
<dbReference type="PDBsum" id="8D9K"/>
<dbReference type="PDBsum" id="8D9L"/>
<dbReference type="PDBsum" id="8EG0"/>
<dbReference type="PDBsum" id="8H0N"/>
<dbReference type="EMDB" id="EMD-26990"/>
<dbReference type="EMDB" id="EMD-26991"/>
<dbReference type="EMDB" id="EMD-27264"/>
<dbReference type="EMDB" id="EMD-27265"/>
<dbReference type="EMDB" id="EMD-28108"/>
<dbReference type="SMR" id="P57081"/>
<dbReference type="BioGRID" id="116001">
    <property type="interactions" value="91"/>
</dbReference>
<dbReference type="ComplexPortal" id="CPX-848">
    <property type="entry name" value="METTL1-WDR4 tRNA (guanine-N(7)-)-methyltransferase"/>
</dbReference>
<dbReference type="DIP" id="DIP-61919N"/>
<dbReference type="FunCoup" id="P57081">
    <property type="interactions" value="1416"/>
</dbReference>
<dbReference type="IntAct" id="P57081">
    <property type="interactions" value="29"/>
</dbReference>
<dbReference type="STRING" id="9606.ENSP00000381266"/>
<dbReference type="GlyGen" id="P57081">
    <property type="glycosylation" value="1 site, 1 O-linked glycan (1 site)"/>
</dbReference>
<dbReference type="iPTMnet" id="P57081"/>
<dbReference type="PhosphoSitePlus" id="P57081"/>
<dbReference type="BioMuta" id="WDR4"/>
<dbReference type="DMDM" id="20141943"/>
<dbReference type="jPOST" id="P57081"/>
<dbReference type="MassIVE" id="P57081"/>
<dbReference type="PaxDb" id="9606-ENSP00000381266"/>
<dbReference type="PeptideAtlas" id="P57081"/>
<dbReference type="ProteomicsDB" id="56991">
    <molecule id="P57081-1"/>
</dbReference>
<dbReference type="ProteomicsDB" id="56992">
    <molecule id="P57081-2"/>
</dbReference>
<dbReference type="ProteomicsDB" id="56993">
    <molecule id="P57081-3"/>
</dbReference>
<dbReference type="Pumba" id="P57081"/>
<dbReference type="Antibodypedia" id="9776">
    <property type="antibodies" value="226 antibodies from 27 providers"/>
</dbReference>
<dbReference type="DNASU" id="10785"/>
<dbReference type="Ensembl" id="ENST00000330317.6">
    <molecule id="P57081-1"/>
    <property type="protein sequence ID" value="ENSP00000328671.2"/>
    <property type="gene ID" value="ENSG00000160193.12"/>
</dbReference>
<dbReference type="Ensembl" id="ENST00000398208.3">
    <molecule id="P57081-1"/>
    <property type="protein sequence ID" value="ENSP00000381266.2"/>
    <property type="gene ID" value="ENSG00000160193.12"/>
</dbReference>
<dbReference type="GeneID" id="10785"/>
<dbReference type="KEGG" id="hsa:10785"/>
<dbReference type="MANE-Select" id="ENST00000398208.3">
    <property type="protein sequence ID" value="ENSP00000381266.2"/>
    <property type="RefSeq nucleotide sequence ID" value="NM_018669.6"/>
    <property type="RefSeq protein sequence ID" value="NP_061139.2"/>
</dbReference>
<dbReference type="UCSC" id="uc002zci.5">
    <molecule id="P57081-1"/>
    <property type="organism name" value="human"/>
</dbReference>
<dbReference type="AGR" id="HGNC:12756"/>
<dbReference type="CTD" id="10785"/>
<dbReference type="DisGeNET" id="10785"/>
<dbReference type="GeneCards" id="WDR4"/>
<dbReference type="HGNC" id="HGNC:12756">
    <property type="gene designation" value="WDR4"/>
</dbReference>
<dbReference type="HPA" id="ENSG00000160193">
    <property type="expression patterns" value="Low tissue specificity"/>
</dbReference>
<dbReference type="MalaCards" id="WDR4"/>
<dbReference type="MIM" id="605924">
    <property type="type" value="gene"/>
</dbReference>
<dbReference type="MIM" id="618346">
    <property type="type" value="phenotype"/>
</dbReference>
<dbReference type="MIM" id="618347">
    <property type="type" value="phenotype"/>
</dbReference>
<dbReference type="neXtProt" id="NX_P57081"/>
<dbReference type="OpenTargets" id="ENSG00000160193"/>
<dbReference type="Orphanet" id="2065">
    <property type="disease" value="Galloway-Mowat syndrome"/>
</dbReference>
<dbReference type="PharmGKB" id="PA37360"/>
<dbReference type="VEuPathDB" id="HostDB:ENSG00000160193"/>
<dbReference type="eggNOG" id="KOG3914">
    <property type="taxonomic scope" value="Eukaryota"/>
</dbReference>
<dbReference type="GeneTree" id="ENSGT00390000012174"/>
<dbReference type="HOGENOM" id="CLU_054270_1_0_1"/>
<dbReference type="InParanoid" id="P57081"/>
<dbReference type="OMA" id="DCIPVVY"/>
<dbReference type="OrthoDB" id="371245at2759"/>
<dbReference type="PAN-GO" id="P57081">
    <property type="GO annotations" value="4 GO annotations based on evolutionary models"/>
</dbReference>
<dbReference type="PhylomeDB" id="P57081"/>
<dbReference type="TreeFam" id="TF105877"/>
<dbReference type="PathwayCommons" id="P57081"/>
<dbReference type="Reactome" id="R-HSA-6782315">
    <property type="pathway name" value="tRNA modification in the nucleus and cytosol"/>
</dbReference>
<dbReference type="SignaLink" id="P57081"/>
<dbReference type="UniPathway" id="UPA00989"/>
<dbReference type="BioGRID-ORCS" id="10785">
    <property type="hits" value="238 hits in 1163 CRISPR screens"/>
</dbReference>
<dbReference type="ChiTaRS" id="WDR4">
    <property type="organism name" value="human"/>
</dbReference>
<dbReference type="GeneWiki" id="WDR4"/>
<dbReference type="GenomeRNAi" id="10785"/>
<dbReference type="Pharos" id="P57081">
    <property type="development level" value="Tbio"/>
</dbReference>
<dbReference type="PRO" id="PR:P57081"/>
<dbReference type="Proteomes" id="UP000005640">
    <property type="component" value="Chromosome 21"/>
</dbReference>
<dbReference type="RNAct" id="P57081">
    <property type="molecule type" value="protein"/>
</dbReference>
<dbReference type="Bgee" id="ENSG00000160193">
    <property type="expression patterns" value="Expressed in gingival epithelium and 133 other cell types or tissues"/>
</dbReference>
<dbReference type="GO" id="GO:0005694">
    <property type="term" value="C:chromosome"/>
    <property type="evidence" value="ECO:0007669"/>
    <property type="project" value="UniProtKB-SubCell"/>
</dbReference>
<dbReference type="GO" id="GO:0005829">
    <property type="term" value="C:cytosol"/>
    <property type="evidence" value="ECO:0000314"/>
    <property type="project" value="HPA"/>
</dbReference>
<dbReference type="GO" id="GO:0005654">
    <property type="term" value="C:nucleoplasm"/>
    <property type="evidence" value="ECO:0000314"/>
    <property type="project" value="HPA"/>
</dbReference>
<dbReference type="GO" id="GO:0005634">
    <property type="term" value="C:nucleus"/>
    <property type="evidence" value="ECO:0000314"/>
    <property type="project" value="UniProtKB"/>
</dbReference>
<dbReference type="GO" id="GO:0106143">
    <property type="term" value="C:tRNA (m7G46) methyltransferase complex"/>
    <property type="evidence" value="ECO:0000314"/>
    <property type="project" value="UniProtKB"/>
</dbReference>
<dbReference type="GO" id="GO:0043527">
    <property type="term" value="C:tRNA methyltransferase complex"/>
    <property type="evidence" value="ECO:0000314"/>
    <property type="project" value="UniProtKB"/>
</dbReference>
<dbReference type="GO" id="GO:0008047">
    <property type="term" value="F:enzyme activator activity"/>
    <property type="evidence" value="ECO:0000314"/>
    <property type="project" value="UniProtKB"/>
</dbReference>
<dbReference type="GO" id="GO:0141106">
    <property type="term" value="F:tRNA methyltransferase activator activity"/>
    <property type="evidence" value="ECO:0000314"/>
    <property type="project" value="UniProt"/>
</dbReference>
<dbReference type="GO" id="GO:0006974">
    <property type="term" value="P:DNA damage response"/>
    <property type="evidence" value="ECO:0007669"/>
    <property type="project" value="UniProtKB-KW"/>
</dbReference>
<dbReference type="GO" id="GO:0106004">
    <property type="term" value="P:tRNA (guanine-N7)-methylation"/>
    <property type="evidence" value="ECO:0000314"/>
    <property type="project" value="UniProtKB"/>
</dbReference>
<dbReference type="GO" id="GO:0006400">
    <property type="term" value="P:tRNA modification"/>
    <property type="evidence" value="ECO:0000314"/>
    <property type="project" value="UniProtKB"/>
</dbReference>
<dbReference type="FunFam" id="2.130.10.10:FF:000454">
    <property type="entry name" value="tRNA (guanine-N(7)-)-methyltransferase non-catalytic subunit WDR4"/>
    <property type="match status" value="1"/>
</dbReference>
<dbReference type="Gene3D" id="2.130.10.10">
    <property type="entry name" value="YVTN repeat-like/Quinoprotein amine dehydrogenase"/>
    <property type="match status" value="1"/>
</dbReference>
<dbReference type="HAMAP" id="MF_03056">
    <property type="entry name" value="TRM82"/>
    <property type="match status" value="1"/>
</dbReference>
<dbReference type="InterPro" id="IPR028884">
    <property type="entry name" value="Trm82"/>
</dbReference>
<dbReference type="InterPro" id="IPR015943">
    <property type="entry name" value="WD40/YVTN_repeat-like_dom_sf"/>
</dbReference>
<dbReference type="InterPro" id="IPR036322">
    <property type="entry name" value="WD40_repeat_dom_sf"/>
</dbReference>
<dbReference type="InterPro" id="IPR001680">
    <property type="entry name" value="WD40_rpt"/>
</dbReference>
<dbReference type="PANTHER" id="PTHR16288:SF0">
    <property type="entry name" value="TRNA (GUANINE-N(7)-)-METHYLTRANSFERASE NON-CATALYTIC SUBUNIT WDR4"/>
    <property type="match status" value="1"/>
</dbReference>
<dbReference type="PANTHER" id="PTHR16288">
    <property type="entry name" value="WD40 REPEAT PROTEIN 4"/>
    <property type="match status" value="1"/>
</dbReference>
<dbReference type="Pfam" id="PF00400">
    <property type="entry name" value="WD40"/>
    <property type="match status" value="2"/>
</dbReference>
<dbReference type="SMART" id="SM00320">
    <property type="entry name" value="WD40"/>
    <property type="match status" value="4"/>
</dbReference>
<dbReference type="SUPFAM" id="SSF50978">
    <property type="entry name" value="WD40 repeat-like"/>
    <property type="match status" value="1"/>
</dbReference>
<dbReference type="PROSITE" id="PS50082">
    <property type="entry name" value="WD_REPEATS_2"/>
    <property type="match status" value="1"/>
</dbReference>
<dbReference type="PROSITE" id="PS50294">
    <property type="entry name" value="WD_REPEATS_REGION"/>
    <property type="match status" value="1"/>
</dbReference>
<feature type="initiator methionine" description="Removed" evidence="22">
    <location>
        <position position="1"/>
    </location>
</feature>
<feature type="chain" id="PRO_0000051348" description="tRNA (guanine-N(7)-)-methyltransferase non-catalytic subunit WDR4">
    <location>
        <begin position="2"/>
        <end position="412"/>
    </location>
</feature>
<feature type="repeat" description="WD 1">
    <location>
        <begin position="3"/>
        <end position="40"/>
    </location>
</feature>
<feature type="repeat" description="WD 2">
    <location>
        <begin position="50"/>
        <end position="90"/>
    </location>
</feature>
<feature type="repeat" description="WD 3">
    <location>
        <begin position="94"/>
        <end position="131"/>
    </location>
</feature>
<feature type="repeat" description="WD 4">
    <location>
        <begin position="137"/>
        <end position="174"/>
    </location>
</feature>
<feature type="repeat" description="WD 5">
    <location>
        <begin position="180"/>
        <end position="218"/>
    </location>
</feature>
<feature type="repeat" description="WD 6">
    <location>
        <begin position="230"/>
        <end position="273"/>
    </location>
</feature>
<feature type="repeat" description="WD 7">
    <location>
        <begin position="319"/>
        <end position="373"/>
    </location>
</feature>
<feature type="region of interest" description="Disordered" evidence="2">
    <location>
        <begin position="377"/>
        <end position="412"/>
    </location>
</feature>
<feature type="modified residue" description="N-acetylalanine" evidence="22">
    <location>
        <position position="2"/>
    </location>
</feature>
<feature type="modified residue" description="Phosphoserine" evidence="30 31">
    <location>
        <position position="391"/>
    </location>
</feature>
<feature type="modified residue" description="Phosphoserine" evidence="29">
    <location>
        <position position="411"/>
    </location>
</feature>
<feature type="splice variant" id="VSP_036935" description="In isoform 3." evidence="24 25">
    <location>
        <begin position="1"/>
        <end position="146"/>
    </location>
</feature>
<feature type="splice variant" id="VSP_036936" description="In isoform 2." evidence="24">
    <location>
        <position position="243"/>
    </location>
</feature>
<feature type="sequence variant" id="VAR_020120" description="In dbSNP:rs2248490." evidence="4 21">
    <original>K</original>
    <variation>N</variation>
    <location>
        <position position="71"/>
    </location>
</feature>
<feature type="sequence variant" id="VAR_087852" description="Found in a patient with lung cancer; abolished formation of N(7)-methylguanine in tRNAs." evidence="18">
    <original>H</original>
    <variation>P</variation>
    <location>
        <position position="144"/>
    </location>
</feature>
<feature type="sequence variant" id="VAR_081828" description="In GAMOS6; uncertain significance; dbSNP:rs1555976610." evidence="10">
    <original>D</original>
    <variation>A</variation>
    <location>
        <position position="164"/>
    </location>
</feature>
<feature type="sequence variant" id="VAR_081829" description="In MIGSB; abolished formation of N(7)-methylguanine in tRNAs." evidence="7 19">
    <original>R</original>
    <variation>L</variation>
    <location>
        <position position="170"/>
    </location>
</feature>
<feature type="sequence variant" id="VAR_081830" description="In GAMOS6; abolished formation of N(7)-methylguanine in tRNAs; dbSNP:rs1292041526." evidence="9 18 19">
    <original>R</original>
    <variation>Q</variation>
    <location>
        <position position="170"/>
    </location>
</feature>
<feature type="sequence variant" id="VAR_033121" description="In dbSNP:rs15736." evidence="4 5">
    <original>P</original>
    <variation>S</variation>
    <location>
        <position position="266"/>
    </location>
</feature>
<feature type="sequence variant" id="VAR_033122" description="In dbSNP:rs6586250.">
    <original>R</original>
    <variation>Q</variation>
    <location>
        <position position="390"/>
    </location>
</feature>
<feature type="mutagenesis site" description="Slightly reduced formation of N(7)-methylguanine in tRNAs." evidence="17 18">
    <original>K</original>
    <variation>A</variation>
    <location>
        <position position="83"/>
    </location>
</feature>
<feature type="mutagenesis site" description="Abolished formation of N(7)-methylguanine in tRNAs." evidence="18">
    <original>RR</original>
    <variation>AA</variation>
    <location>
        <begin position="103"/>
        <end position="104"/>
    </location>
</feature>
<feature type="mutagenesis site" description="Does not affect formation of N(7)-methylguanine in tRNAs." evidence="17 18">
    <original>R</original>
    <variation>A</variation>
    <location>
        <position position="103"/>
    </location>
</feature>
<feature type="mutagenesis site" description="Does not affect formation of N(7)-methylguanine in tRNAs." evidence="17 18">
    <original>R</original>
    <variation>A</variation>
    <location>
        <position position="104"/>
    </location>
</feature>
<feature type="mutagenesis site" description="Does not affect formation of N(7)-methylguanine in tRNAs." evidence="18">
    <original>K</original>
    <variation>A</variation>
    <location>
        <position position="122"/>
    </location>
</feature>
<feature type="mutagenesis site" description="Reduced formation of N(7)-methylguanine in tRNAs." evidence="17">
    <original>M</original>
    <variation>A</variation>
    <location>
        <position position="147"/>
    </location>
</feature>
<feature type="mutagenesis site" description="Abolished formation of N(7)-methylguanine in tRNAs." evidence="17 18">
    <original>R</original>
    <variation>A</variation>
    <location>
        <position position="165"/>
    </location>
</feature>
<feature type="mutagenesis site" description="Abolished formation of N(7)-methylguanine in tRNAs." evidence="18">
    <original>D</original>
    <variation>A</variation>
    <location>
        <position position="166"/>
    </location>
</feature>
<feature type="mutagenesis site" description="Abolished formation of N(7)-methylguanine in tRNAs." evidence="17 18">
    <original>E</original>
    <variation>A</variation>
    <location>
        <position position="167"/>
    </location>
</feature>
<feature type="mutagenesis site" description="Reduced formation of N(7)-methylguanine in tRNAs." evidence="17">
    <original>R</original>
    <variation>A</variation>
    <location>
        <position position="170"/>
    </location>
</feature>
<feature type="mutagenesis site" description="Reduced formation of N(7)-methylguanine in tRNAs." evidence="17">
    <original>F</original>
    <variation>A</variation>
    <location>
        <position position="365"/>
    </location>
</feature>
<feature type="mutagenesis site" description="Slightly reduced formation of N(7)-methylguanine in tRNAs." evidence="17">
    <original>Y</original>
    <variation>A</variation>
    <location>
        <position position="371"/>
    </location>
</feature>
<feature type="sequence conflict" description="In Ref. 1; CAB93144/CAB93145." evidence="27" ref="1">
    <original>E</original>
    <variation>K</variation>
    <location>
        <position position="141"/>
    </location>
</feature>
<feature type="sequence conflict" description="In Ref. 1; CAB93144/CAB93145." evidence="27" ref="1">
    <original>L</original>
    <variation>V</variation>
    <location>
        <position position="149"/>
    </location>
</feature>
<feature type="sequence conflict" description="In Ref. 2; BAG37500." evidence="27" ref="2">
    <original>V</original>
    <variation>A</variation>
    <location>
        <position position="236"/>
    </location>
</feature>
<feature type="sequence conflict" description="In Ref. 2; BAG60319." evidence="27" ref="2">
    <original>R</original>
    <variation>K</variation>
    <location>
        <position position="318"/>
    </location>
</feature>
<feature type="strand" evidence="35">
    <location>
        <begin position="5"/>
        <end position="10"/>
    </location>
</feature>
<feature type="strand" evidence="35">
    <location>
        <begin position="13"/>
        <end position="18"/>
    </location>
</feature>
<feature type="strand" evidence="35">
    <location>
        <begin position="21"/>
        <end position="26"/>
    </location>
</feature>
<feature type="strand" evidence="35">
    <location>
        <begin position="35"/>
        <end position="39"/>
    </location>
</feature>
<feature type="strand" evidence="35">
    <location>
        <begin position="64"/>
        <end position="69"/>
    </location>
</feature>
<feature type="strand" evidence="35">
    <location>
        <begin position="73"/>
        <end position="80"/>
    </location>
</feature>
<feature type="strand" evidence="35">
    <location>
        <begin position="83"/>
        <end position="89"/>
    </location>
</feature>
<feature type="turn" evidence="35">
    <location>
        <begin position="90"/>
        <end position="93"/>
    </location>
</feature>
<feature type="strand" evidence="35">
    <location>
        <begin position="94"/>
        <end position="100"/>
    </location>
</feature>
<feature type="strand" evidence="35">
    <location>
        <begin position="105"/>
        <end position="110"/>
    </location>
</feature>
<feature type="strand" evidence="35">
    <location>
        <begin position="114"/>
        <end position="121"/>
    </location>
</feature>
<feature type="strand" evidence="35">
    <location>
        <begin position="124"/>
        <end position="133"/>
    </location>
</feature>
<feature type="strand" evidence="35">
    <location>
        <begin position="139"/>
        <end position="143"/>
    </location>
</feature>
<feature type="strand" evidence="35">
    <location>
        <begin position="148"/>
        <end position="153"/>
    </location>
</feature>
<feature type="strand" evidence="35">
    <location>
        <begin position="159"/>
        <end position="164"/>
    </location>
</feature>
<feature type="turn" evidence="33">
    <location>
        <begin position="165"/>
        <end position="167"/>
    </location>
</feature>
<feature type="strand" evidence="35">
    <location>
        <begin position="169"/>
        <end position="173"/>
    </location>
</feature>
<feature type="strand" evidence="35">
    <location>
        <begin position="176"/>
        <end position="184"/>
    </location>
</feature>
<feature type="strand" evidence="35">
    <location>
        <begin position="191"/>
        <end position="196"/>
    </location>
</feature>
<feature type="strand" evidence="35">
    <location>
        <begin position="198"/>
        <end position="200"/>
    </location>
</feature>
<feature type="strand" evidence="35">
    <location>
        <begin position="203"/>
        <end position="208"/>
    </location>
</feature>
<feature type="strand" evidence="35">
    <location>
        <begin position="211"/>
        <end position="217"/>
    </location>
</feature>
<feature type="turn" evidence="35">
    <location>
        <begin position="218"/>
        <end position="221"/>
    </location>
</feature>
<feature type="strand" evidence="35">
    <location>
        <begin position="222"/>
        <end position="228"/>
    </location>
</feature>
<feature type="helix" evidence="35">
    <location>
        <begin position="229"/>
        <end position="232"/>
    </location>
</feature>
<feature type="helix" evidence="32">
    <location>
        <begin position="233"/>
        <end position="236"/>
    </location>
</feature>
<feature type="helix" evidence="32">
    <location>
        <begin position="241"/>
        <end position="243"/>
    </location>
</feature>
<feature type="strand" evidence="35">
    <location>
        <begin position="246"/>
        <end position="252"/>
    </location>
</feature>
<feature type="turn" evidence="35">
    <location>
        <begin position="253"/>
        <end position="256"/>
    </location>
</feature>
<feature type="strand" evidence="35">
    <location>
        <begin position="257"/>
        <end position="262"/>
    </location>
</feature>
<feature type="strand" evidence="33">
    <location>
        <begin position="263"/>
        <end position="265"/>
    </location>
</feature>
<feature type="strand" evidence="35">
    <location>
        <begin position="267"/>
        <end position="274"/>
    </location>
</feature>
<feature type="turn" evidence="35">
    <location>
        <begin position="275"/>
        <end position="278"/>
    </location>
</feature>
<feature type="strand" evidence="35">
    <location>
        <begin position="279"/>
        <end position="287"/>
    </location>
</feature>
<feature type="strand" evidence="35">
    <location>
        <begin position="292"/>
        <end position="298"/>
    </location>
</feature>
<feature type="turn" evidence="35">
    <location>
        <begin position="299"/>
        <end position="301"/>
    </location>
</feature>
<feature type="strand" evidence="35">
    <location>
        <begin position="302"/>
        <end position="308"/>
    </location>
</feature>
<feature type="strand" evidence="35">
    <location>
        <begin position="310"/>
        <end position="320"/>
    </location>
</feature>
<feature type="strand" evidence="35">
    <location>
        <begin position="323"/>
        <end position="326"/>
    </location>
</feature>
<feature type="helix" evidence="35">
    <location>
        <begin position="331"/>
        <end position="342"/>
    </location>
</feature>
<feature type="helix" evidence="35">
    <location>
        <begin position="344"/>
        <end position="346"/>
    </location>
</feature>
<feature type="helix" evidence="34">
    <location>
        <begin position="353"/>
        <end position="358"/>
    </location>
</feature>
<feature type="helix" evidence="34">
    <location>
        <begin position="365"/>
        <end position="376"/>
    </location>
</feature>
<comment type="function">
    <text evidence="3 8 12 13 14 15 17 18 19 20">Non-catalytic component of the METTL1-WDR4 methyltransferase complex required for the formation of N(7)-methylguanine in a subset of RNA species, such as tRNAs, mRNAs and microRNAs (miRNAs) (PubMed:12403464, PubMed:31031083, PubMed:31031084, PubMed:36599982, PubMed:36599985, PubMed:37369656). In the METTL1-WDR4 methyltransferase complex, WDR4 acts as a scaffold for tRNA-binding (PubMed:36599982, PubMed:36599985, PubMed:37369656). Required for the formation of N(7)-methylguanine at position 46 (m7G46) in a large subset of tRNAs that contain the 5'-RAGGU-3' motif within the variable loop (PubMed:12403464, PubMed:34352206, PubMed:34352207, PubMed:36599982, PubMed:36599985, PubMed:37369656). M7G46 interacts with C13-G22 in the D-loop to stabilize tRNA tertiary structure and protect tRNAs from decay (PubMed:36599982, PubMed:36599985). Also required for the formation of N(7)-methylguanine at internal sites in a subset of mRNAs (PubMed:31031084, PubMed:37379838). Also required for methylation of a specific subset of miRNAs, such as let-7 (PubMed:31031083). Independently of METTL1, also plays a role in genome stability: localizes at the DNA replication site and regulates endonucleolytic activities of FEN1 (PubMed:26751069).</text>
</comment>
<comment type="pathway">
    <text evidence="3 17 18 19">tRNA modification; N(7)-methylguanine-tRNA biosynthesis.</text>
</comment>
<comment type="subunit">
    <text evidence="3 8 17 18 19 20">Non-catalytic component of the METTL1-WDR4 complex, composed of METTL1 and WDR4 (PubMed:12403464, PubMed:26751069, PubMed:36599982, PubMed:36599985, PubMed:37379838). Interacts with FEN1; the interaction is direct (PubMed:26751069).</text>
</comment>
<comment type="interaction">
    <interactant intactId="EBI-750427">
        <id>P57081</id>
    </interactant>
    <interactant intactId="EBI-8638992">
        <id>Q9NWS6</id>
        <label>FAM118A</label>
    </interactant>
    <organismsDiffer>false</organismsDiffer>
    <experiments>7</experiments>
</comment>
<comment type="interaction">
    <interactant intactId="EBI-750427">
        <id>P57081</id>
    </interactant>
    <interactant intactId="EBI-707816">
        <id>P39748</id>
        <label>FEN1</label>
    </interactant>
    <organismsDiffer>false</organismsDiffer>
    <experiments>8</experiments>
</comment>
<comment type="interaction">
    <interactant intactId="EBI-750427">
        <id>P57081</id>
    </interactant>
    <interactant intactId="EBI-750415">
        <id>Q9UBP6</id>
        <label>METTL1</label>
    </interactant>
    <organismsDiffer>false</organismsDiffer>
    <experiments>15</experiments>
</comment>
<comment type="interaction">
    <interactant intactId="EBI-750427">
        <id>P57081</id>
    </interactant>
    <interactant intactId="EBI-536715">
        <id>P53611</id>
        <label>RABGGTB</label>
    </interactant>
    <organismsDiffer>false</organismsDiffer>
    <experiments>6</experiments>
</comment>
<comment type="subcellular location">
    <subcellularLocation>
        <location evidence="6 8">Nucleus</location>
    </subcellularLocation>
    <subcellularLocation>
        <location evidence="8">Chromosome</location>
    </subcellularLocation>
    <text evidence="8">Localizes at the site of nascent DNA synthesis.</text>
</comment>
<comment type="alternative products">
    <event type="alternative splicing"/>
    <isoform>
        <id>P57081-1</id>
        <name>1</name>
        <sequence type="displayed"/>
    </isoform>
    <isoform>
        <id>P57081-2</id>
        <name>2</name>
        <sequence type="described" ref="VSP_036936"/>
    </isoform>
    <isoform>
        <id>P57081-3</id>
        <name>3</name>
        <sequence type="described" ref="VSP_036935"/>
    </isoform>
</comment>
<comment type="induction">
    <text evidence="14 15 16">Amplified and overexpressed in a number of cancers (at protein level).</text>
</comment>
<comment type="disease" evidence="9 10 11 18 19">
    <disease id="DI-05498">
        <name>Galloway-Mowat syndrome 6</name>
        <acronym>GAMOS6</acronym>
        <description>A form of Galloway-Mowat syndrome, a severe renal-neurological disease characterized by early-onset nephrotic syndrome associated with microcephaly, central nervous system abnormalities, developmental delays, and a propensity for seizures. Brain anomalies include gyration defects ranging from lissencephaly to pachygyria and polymicrogyria, and cerebellar hypoplasia. Most patients show facial dysmorphism characterized by a small, narrow forehead, large/floppy ears, deep-set eyes, hypertelorism and micrognathia. Additional variable features are visual impairment and arachnodactyly. Most patients die in early childhood. GAMOS6 is an autosomal recessive form with onset in infancy or early childhood. Affected individuals manifest microcephaly, global developmental delay, variable degrees of intellectual disability, and growth deficiency. Renal impairment may be age-dependent or may not be present.</description>
        <dbReference type="MIM" id="618347"/>
    </disease>
    <text>The disease is caused by variants affecting the gene represented in this entry.</text>
</comment>
<comment type="disease" evidence="7 19">
    <disease id="DI-05506">
        <name>Microcephaly, growth deficiency, seizures, and brain malformations</name>
        <acronym>MIGSB</acronym>
        <description>An autosomal recessive disorder characterized by intrauterine growth retardation, postnatal growth deficiency, microcephaly, facial dysmorphism, early-onset seizures, brain malformations such as partial agenesis of the corpus callosum and simplified gyration, and poor or absent psychomotor development.</description>
        <dbReference type="MIM" id="618346"/>
    </disease>
    <text>The disease is caused by variants affecting the gene represented in this entry.</text>
</comment>
<comment type="miscellaneous">
    <text evidence="14 15 16">In the context of cancer, overexpression of the METTL1-WDR4 methyltransferase complex promotes cancer progression by driving oncogenic transformation (PubMed:34352206, PubMed:34352207, PubMed:34371184). The METTL1-WDR4 methyltransferase complex drives oncogenesis by mediating the formation of N(7)-methylguanine at position 46 (m7G46) in some tRNAs, in particular Arg-TCT-4-1 (TRR-TCT4-1), leading to increased translation of mRNAs, including cell cycle regulators that are enriched in the corresponding AGA codon (PubMed:34352206, PubMed:34352207, PubMed:34371184).</text>
</comment>
<comment type="similarity">
    <text evidence="1">Belongs to the WD repeat TRM82 family.</text>
</comment>
<evidence type="ECO:0000255" key="1">
    <source>
        <dbReference type="HAMAP-Rule" id="MF_03056"/>
    </source>
</evidence>
<evidence type="ECO:0000256" key="2">
    <source>
        <dbReference type="SAM" id="MobiDB-lite"/>
    </source>
</evidence>
<evidence type="ECO:0000269" key="3">
    <source>
    </source>
</evidence>
<evidence type="ECO:0000269" key="4">
    <source>
    </source>
</evidence>
<evidence type="ECO:0000269" key="5">
    <source>
    </source>
</evidence>
<evidence type="ECO:0000269" key="6">
    <source>
    </source>
</evidence>
<evidence type="ECO:0000269" key="7">
    <source>
    </source>
</evidence>
<evidence type="ECO:0000269" key="8">
    <source>
    </source>
</evidence>
<evidence type="ECO:0000269" key="9">
    <source>
    </source>
</evidence>
<evidence type="ECO:0000269" key="10">
    <source>
    </source>
</evidence>
<evidence type="ECO:0000269" key="11">
    <source>
    </source>
</evidence>
<evidence type="ECO:0000269" key="12">
    <source>
    </source>
</evidence>
<evidence type="ECO:0000269" key="13">
    <source>
    </source>
</evidence>
<evidence type="ECO:0000269" key="14">
    <source>
    </source>
</evidence>
<evidence type="ECO:0000269" key="15">
    <source>
    </source>
</evidence>
<evidence type="ECO:0000269" key="16">
    <source>
    </source>
</evidence>
<evidence type="ECO:0000269" key="17">
    <source>
    </source>
</evidence>
<evidence type="ECO:0000269" key="18">
    <source>
    </source>
</evidence>
<evidence type="ECO:0000269" key="19">
    <source>
    </source>
</evidence>
<evidence type="ECO:0000269" key="20">
    <source>
    </source>
</evidence>
<evidence type="ECO:0000269" key="21">
    <source ref="4"/>
</evidence>
<evidence type="ECO:0000269" key="22">
    <source ref="6"/>
</evidence>
<evidence type="ECO:0000303" key="23">
    <source>
    </source>
</evidence>
<evidence type="ECO:0000303" key="24">
    <source>
    </source>
</evidence>
<evidence type="ECO:0000303" key="25">
    <source>
    </source>
</evidence>
<evidence type="ECO:0000303" key="26">
    <source>
    </source>
</evidence>
<evidence type="ECO:0000305" key="27"/>
<evidence type="ECO:0000312" key="28">
    <source>
        <dbReference type="HGNC" id="HGNC:12756"/>
    </source>
</evidence>
<evidence type="ECO:0007744" key="29">
    <source>
    </source>
</evidence>
<evidence type="ECO:0007744" key="30">
    <source>
    </source>
</evidence>
<evidence type="ECO:0007744" key="31">
    <source>
    </source>
</evidence>
<evidence type="ECO:0007829" key="32">
    <source>
        <dbReference type="PDB" id="7U20"/>
    </source>
</evidence>
<evidence type="ECO:0007829" key="33">
    <source>
        <dbReference type="PDB" id="8CTH"/>
    </source>
</evidence>
<evidence type="ECO:0007829" key="34">
    <source>
        <dbReference type="PDB" id="8D58"/>
    </source>
</evidence>
<evidence type="ECO:0007829" key="35">
    <source>
        <dbReference type="PDB" id="8H0N"/>
    </source>
</evidence>
<reference key="1">
    <citation type="journal article" date="2000" name="Genomics">
        <title>Isolation and characterization of a human chromosome 21q22.3 gene (WDR4) and its mouse homologue that code for a WD-repeat protein.</title>
        <authorList>
            <person name="Michaud J."/>
            <person name="Kudoh J."/>
            <person name="Berry A."/>
            <person name="Bonne-Tamir B."/>
            <person name="Lalioti M.D."/>
            <person name="Rossier C."/>
            <person name="Shibuya K."/>
            <person name="Kawasaki K."/>
            <person name="Asakawa S."/>
            <person name="Minoshima S."/>
            <person name="Shimizu N."/>
            <person name="Antonarakis S.E."/>
            <person name="Scott H.S."/>
        </authorList>
    </citation>
    <scope>NUCLEOTIDE SEQUENCE [GENOMIC DNA / MRNA] (ISOFORM 1)</scope>
</reference>
<reference key="2">
    <citation type="journal article" date="2004" name="Nat. Genet.">
        <title>Complete sequencing and characterization of 21,243 full-length human cDNAs.</title>
        <authorList>
            <person name="Ota T."/>
            <person name="Suzuki Y."/>
            <person name="Nishikawa T."/>
            <person name="Otsuki T."/>
            <person name="Sugiyama T."/>
            <person name="Irie R."/>
            <person name="Wakamatsu A."/>
            <person name="Hayashi K."/>
            <person name="Sato H."/>
            <person name="Nagai K."/>
            <person name="Kimura K."/>
            <person name="Makita H."/>
            <person name="Sekine M."/>
            <person name="Obayashi M."/>
            <person name="Nishi T."/>
            <person name="Shibahara T."/>
            <person name="Tanaka T."/>
            <person name="Ishii S."/>
            <person name="Yamamoto J."/>
            <person name="Saito K."/>
            <person name="Kawai Y."/>
            <person name="Isono Y."/>
            <person name="Nakamura Y."/>
            <person name="Nagahari K."/>
            <person name="Murakami K."/>
            <person name="Yasuda T."/>
            <person name="Iwayanagi T."/>
            <person name="Wagatsuma M."/>
            <person name="Shiratori A."/>
            <person name="Sudo H."/>
            <person name="Hosoiri T."/>
            <person name="Kaku Y."/>
            <person name="Kodaira H."/>
            <person name="Kondo H."/>
            <person name="Sugawara M."/>
            <person name="Takahashi M."/>
            <person name="Kanda K."/>
            <person name="Yokoi T."/>
            <person name="Furuya T."/>
            <person name="Kikkawa E."/>
            <person name="Omura Y."/>
            <person name="Abe K."/>
            <person name="Kamihara K."/>
            <person name="Katsuta N."/>
            <person name="Sato K."/>
            <person name="Tanikawa M."/>
            <person name="Yamazaki M."/>
            <person name="Ninomiya K."/>
            <person name="Ishibashi T."/>
            <person name="Yamashita H."/>
            <person name="Murakawa K."/>
            <person name="Fujimori K."/>
            <person name="Tanai H."/>
            <person name="Kimata M."/>
            <person name="Watanabe M."/>
            <person name="Hiraoka S."/>
            <person name="Chiba Y."/>
            <person name="Ishida S."/>
            <person name="Ono Y."/>
            <person name="Takiguchi S."/>
            <person name="Watanabe S."/>
            <person name="Yosida M."/>
            <person name="Hotuta T."/>
            <person name="Kusano J."/>
            <person name="Kanehori K."/>
            <person name="Takahashi-Fujii A."/>
            <person name="Hara H."/>
            <person name="Tanase T.-O."/>
            <person name="Nomura Y."/>
            <person name="Togiya S."/>
            <person name="Komai F."/>
            <person name="Hara R."/>
            <person name="Takeuchi K."/>
            <person name="Arita M."/>
            <person name="Imose N."/>
            <person name="Musashino K."/>
            <person name="Yuuki H."/>
            <person name="Oshima A."/>
            <person name="Sasaki N."/>
            <person name="Aotsuka S."/>
            <person name="Yoshikawa Y."/>
            <person name="Matsunawa H."/>
            <person name="Ichihara T."/>
            <person name="Shiohata N."/>
            <person name="Sano S."/>
            <person name="Moriya S."/>
            <person name="Momiyama H."/>
            <person name="Satoh N."/>
            <person name="Takami S."/>
            <person name="Terashima Y."/>
            <person name="Suzuki O."/>
            <person name="Nakagawa S."/>
            <person name="Senoh A."/>
            <person name="Mizoguchi H."/>
            <person name="Goto Y."/>
            <person name="Shimizu F."/>
            <person name="Wakebe H."/>
            <person name="Hishigaki H."/>
            <person name="Watanabe T."/>
            <person name="Sugiyama A."/>
            <person name="Takemoto M."/>
            <person name="Kawakami B."/>
            <person name="Yamazaki M."/>
            <person name="Watanabe K."/>
            <person name="Kumagai A."/>
            <person name="Itakura S."/>
            <person name="Fukuzumi Y."/>
            <person name="Fujimori Y."/>
            <person name="Komiyama M."/>
            <person name="Tashiro H."/>
            <person name="Tanigami A."/>
            <person name="Fujiwara T."/>
            <person name="Ono T."/>
            <person name="Yamada K."/>
            <person name="Fujii Y."/>
            <person name="Ozaki K."/>
            <person name="Hirao M."/>
            <person name="Ohmori Y."/>
            <person name="Kawabata A."/>
            <person name="Hikiji T."/>
            <person name="Kobatake N."/>
            <person name="Inagaki H."/>
            <person name="Ikema Y."/>
            <person name="Okamoto S."/>
            <person name="Okitani R."/>
            <person name="Kawakami T."/>
            <person name="Noguchi S."/>
            <person name="Itoh T."/>
            <person name="Shigeta K."/>
            <person name="Senba T."/>
            <person name="Matsumura K."/>
            <person name="Nakajima Y."/>
            <person name="Mizuno T."/>
            <person name="Morinaga M."/>
            <person name="Sasaki M."/>
            <person name="Togashi T."/>
            <person name="Oyama M."/>
            <person name="Hata H."/>
            <person name="Watanabe M."/>
            <person name="Komatsu T."/>
            <person name="Mizushima-Sugano J."/>
            <person name="Satoh T."/>
            <person name="Shirai Y."/>
            <person name="Takahashi Y."/>
            <person name="Nakagawa K."/>
            <person name="Okumura K."/>
            <person name="Nagase T."/>
            <person name="Nomura N."/>
            <person name="Kikuchi H."/>
            <person name="Masuho Y."/>
            <person name="Yamashita R."/>
            <person name="Nakai K."/>
            <person name="Yada T."/>
            <person name="Nakamura Y."/>
            <person name="Ohara O."/>
            <person name="Isogai T."/>
            <person name="Sugano S."/>
        </authorList>
    </citation>
    <scope>NUCLEOTIDE SEQUENCE [LARGE SCALE MRNA] (ISOFORMS 2 AND 3)</scope>
    <scope>VARIANTS ASN-71 AND SER-266</scope>
    <source>
        <tissue>Lung</tissue>
        <tissue>Trachea</tissue>
    </source>
</reference>
<reference key="3">
    <citation type="journal article" date="2000" name="Nature">
        <title>The DNA sequence of human chromosome 21.</title>
        <authorList>
            <person name="Hattori M."/>
            <person name="Fujiyama A."/>
            <person name="Taylor T.D."/>
            <person name="Watanabe H."/>
            <person name="Yada T."/>
            <person name="Park H.-S."/>
            <person name="Toyoda A."/>
            <person name="Ishii K."/>
            <person name="Totoki Y."/>
            <person name="Choi D.-K."/>
            <person name="Groner Y."/>
            <person name="Soeda E."/>
            <person name="Ohki M."/>
            <person name="Takagi T."/>
            <person name="Sakaki Y."/>
            <person name="Taudien S."/>
            <person name="Blechschmidt K."/>
            <person name="Polley A."/>
            <person name="Menzel U."/>
            <person name="Delabar J."/>
            <person name="Kumpf K."/>
            <person name="Lehmann R."/>
            <person name="Patterson D."/>
            <person name="Reichwald K."/>
            <person name="Rump A."/>
            <person name="Schillhabel M."/>
            <person name="Schudy A."/>
            <person name="Zimmermann W."/>
            <person name="Rosenthal A."/>
            <person name="Kudoh J."/>
            <person name="Shibuya K."/>
            <person name="Kawasaki K."/>
            <person name="Asakawa S."/>
            <person name="Shintani A."/>
            <person name="Sasaki T."/>
            <person name="Nagamine K."/>
            <person name="Mitsuyama S."/>
            <person name="Antonarakis S.E."/>
            <person name="Minoshima S."/>
            <person name="Shimizu N."/>
            <person name="Nordsiek G."/>
            <person name="Hornischer K."/>
            <person name="Brandt P."/>
            <person name="Scharfe M."/>
            <person name="Schoen O."/>
            <person name="Desario A."/>
            <person name="Reichelt J."/>
            <person name="Kauer G."/>
            <person name="Bloecker H."/>
            <person name="Ramser J."/>
            <person name="Beck A."/>
            <person name="Klages S."/>
            <person name="Hennig S."/>
            <person name="Riesselmann L."/>
            <person name="Dagand E."/>
            <person name="Wehrmeyer S."/>
            <person name="Borzym K."/>
            <person name="Gardiner K."/>
            <person name="Nizetic D."/>
            <person name="Francis F."/>
            <person name="Lehrach H."/>
            <person name="Reinhardt R."/>
            <person name="Yaspo M.-L."/>
        </authorList>
    </citation>
    <scope>NUCLEOTIDE SEQUENCE [LARGE SCALE GENOMIC DNA]</scope>
</reference>
<reference key="4">
    <citation type="submission" date="2005-09" db="EMBL/GenBank/DDBJ databases">
        <authorList>
            <person name="Mural R.J."/>
            <person name="Istrail S."/>
            <person name="Sutton G.G."/>
            <person name="Florea L."/>
            <person name="Halpern A.L."/>
            <person name="Mobarry C.M."/>
            <person name="Lippert R."/>
            <person name="Walenz B."/>
            <person name="Shatkay H."/>
            <person name="Dew I."/>
            <person name="Miller J.R."/>
            <person name="Flanigan M.J."/>
            <person name="Edwards N.J."/>
            <person name="Bolanos R."/>
            <person name="Fasulo D."/>
            <person name="Halldorsson B.V."/>
            <person name="Hannenhalli S."/>
            <person name="Turner R."/>
            <person name="Yooseph S."/>
            <person name="Lu F."/>
            <person name="Nusskern D.R."/>
            <person name="Shue B.C."/>
            <person name="Zheng X.H."/>
            <person name="Zhong F."/>
            <person name="Delcher A.L."/>
            <person name="Huson D.H."/>
            <person name="Kravitz S.A."/>
            <person name="Mouchard L."/>
            <person name="Reinert K."/>
            <person name="Remington K.A."/>
            <person name="Clark A.G."/>
            <person name="Waterman M.S."/>
            <person name="Eichler E.E."/>
            <person name="Adams M.D."/>
            <person name="Hunkapiller M.W."/>
            <person name="Myers E.W."/>
            <person name="Venter J.C."/>
        </authorList>
    </citation>
    <scope>NUCLEOTIDE SEQUENCE [LARGE SCALE GENOMIC DNA]</scope>
    <scope>VARIANT ASN-71</scope>
</reference>
<reference key="5">
    <citation type="journal article" date="2004" name="Genome Res.">
        <title>The status, quality, and expansion of the NIH full-length cDNA project: the Mammalian Gene Collection (MGC).</title>
        <authorList>
            <consortium name="The MGC Project Team"/>
        </authorList>
    </citation>
    <scope>NUCLEOTIDE SEQUENCE [LARGE SCALE MRNA] (ISOFORMS 1 AND 3)</scope>
    <scope>VARIANT SER-266</scope>
    <source>
        <tissue>Lung</tissue>
        <tissue>Uterus</tissue>
    </source>
</reference>
<reference key="6">
    <citation type="submission" date="2010-01" db="UniProtKB">
        <authorList>
            <person name="Bienvenut W.V."/>
        </authorList>
    </citation>
    <scope>PROTEIN SEQUENCE OF 2-17 AND 105-116</scope>
    <scope>CLEAVAGE OF INITIATOR METHIONINE</scope>
    <scope>ACETYLATION AT ALA-2</scope>
    <scope>IDENTIFICATION BY MASS SPECTROMETRY</scope>
    <source>
        <tissue>Ovarian carcinoma</tissue>
    </source>
</reference>
<reference key="7">
    <citation type="journal article" date="2002" name="RNA">
        <title>Two proteins that form a complex are required for 7-methylguanosine modification of yeast tRNA.</title>
        <authorList>
            <person name="Alexandrov A."/>
            <person name="Martzen M.R."/>
            <person name="Phizicky E.M."/>
        </authorList>
    </citation>
    <scope>FUNCTION</scope>
    <scope>PATHWAY</scope>
    <scope>INTERACTION WITH METTL1</scope>
</reference>
<reference key="8">
    <citation type="journal article" date="2005" name="EMBO J.">
        <title>The tRNA methylase METTL1 is phosphorylated and inactivated by PKB and RSK in vitro and in cells.</title>
        <authorList>
            <person name="Cartlidge R.A."/>
            <person name="Knebel A."/>
            <person name="Peggie M."/>
            <person name="Alexandrov A."/>
            <person name="Phizicky E.M."/>
            <person name="Cohen P."/>
        </authorList>
    </citation>
    <scope>SUBCELLULAR LOCATION</scope>
    <scope>INTERACTION WITH METTL1</scope>
</reference>
<reference key="9">
    <citation type="journal article" date="2008" name="Proc. Natl. Acad. Sci. U.S.A.">
        <title>A quantitative atlas of mitotic phosphorylation.</title>
        <authorList>
            <person name="Dephoure N."/>
            <person name="Zhou C."/>
            <person name="Villen J."/>
            <person name="Beausoleil S.A."/>
            <person name="Bakalarski C.E."/>
            <person name="Elledge S.J."/>
            <person name="Gygi S.P."/>
        </authorList>
    </citation>
    <scope>PHOSPHORYLATION [LARGE SCALE ANALYSIS] AT SER-411</scope>
    <scope>IDENTIFICATION BY MASS SPECTROMETRY [LARGE SCALE ANALYSIS]</scope>
    <source>
        <tissue>Cervix carcinoma</tissue>
    </source>
</reference>
<reference key="10">
    <citation type="journal article" date="2010" name="Sci. Signal.">
        <title>Quantitative phosphoproteomics reveals widespread full phosphorylation site occupancy during mitosis.</title>
        <authorList>
            <person name="Olsen J.V."/>
            <person name="Vermeulen M."/>
            <person name="Santamaria A."/>
            <person name="Kumar C."/>
            <person name="Miller M.L."/>
            <person name="Jensen L.J."/>
            <person name="Gnad F."/>
            <person name="Cox J."/>
            <person name="Jensen T.S."/>
            <person name="Nigg E.A."/>
            <person name="Brunak S."/>
            <person name="Mann M."/>
        </authorList>
    </citation>
    <scope>IDENTIFICATION BY MASS SPECTROMETRY [LARGE SCALE ANALYSIS]</scope>
    <source>
        <tissue>Cervix carcinoma</tissue>
    </source>
</reference>
<reference key="11">
    <citation type="journal article" date="2011" name="BMC Syst. Biol.">
        <title>Initial characterization of the human central proteome.</title>
        <authorList>
            <person name="Burkard T.R."/>
            <person name="Planyavsky M."/>
            <person name="Kaupe I."/>
            <person name="Breitwieser F.P."/>
            <person name="Buerckstuemmer T."/>
            <person name="Bennett K.L."/>
            <person name="Superti-Furga G."/>
            <person name="Colinge J."/>
        </authorList>
    </citation>
    <scope>IDENTIFICATION BY MASS SPECTROMETRY [LARGE SCALE ANALYSIS]</scope>
</reference>
<reference key="12">
    <citation type="journal article" date="2011" name="Sci. Signal.">
        <title>System-wide temporal characterization of the proteome and phosphoproteome of human embryonic stem cell differentiation.</title>
        <authorList>
            <person name="Rigbolt K.T."/>
            <person name="Prokhorova T.A."/>
            <person name="Akimov V."/>
            <person name="Henningsen J."/>
            <person name="Johansen P.T."/>
            <person name="Kratchmarova I."/>
            <person name="Kassem M."/>
            <person name="Mann M."/>
            <person name="Olsen J.V."/>
            <person name="Blagoev B."/>
        </authorList>
    </citation>
    <scope>PHOSPHORYLATION [LARGE SCALE ANALYSIS] AT SER-391</scope>
    <scope>IDENTIFICATION BY MASS SPECTROMETRY [LARGE SCALE ANALYSIS]</scope>
</reference>
<reference key="13">
    <citation type="journal article" date="2013" name="J. Proteome Res.">
        <title>Toward a comprehensive characterization of a human cancer cell phosphoproteome.</title>
        <authorList>
            <person name="Zhou H."/>
            <person name="Di Palma S."/>
            <person name="Preisinger C."/>
            <person name="Peng M."/>
            <person name="Polat A.N."/>
            <person name="Heck A.J."/>
            <person name="Mohammed S."/>
        </authorList>
    </citation>
    <scope>PHOSPHORYLATION [LARGE SCALE ANALYSIS] AT SER-391</scope>
    <scope>IDENTIFICATION BY MASS SPECTROMETRY [LARGE SCALE ANALYSIS]</scope>
    <source>
        <tissue>Erythroleukemia</tissue>
    </source>
</reference>
<reference key="14">
    <citation type="journal article" date="2016" name="PLoS Biol.">
        <title>Wuho is a new member in maintaining genome stability through its interaction with flap endonuclease 1.</title>
        <authorList>
            <person name="Cheng I.C."/>
            <person name="Chen B.C."/>
            <person name="Shuai H.H."/>
            <person name="Chien F.C."/>
            <person name="Chen P."/>
            <person name="Hsieh T.S."/>
        </authorList>
    </citation>
    <scope>FUNCTION</scope>
    <scope>SUBCELLULAR LOCATION</scope>
    <scope>INTERACTION WITH METTL1 AND FEN1</scope>
</reference>
<reference key="15">
    <citation type="journal article" date="2018" name="Am. J. Med. Genet. A">
        <title>Mutations in WDR4 as a new cause of Galloway-Mowat syndrome.</title>
        <authorList>
            <person name="Braun D.A."/>
            <person name="Shril S."/>
            <person name="Sinha A."/>
            <person name="Schneider R."/>
            <person name="Tan W."/>
            <person name="Ashraf S."/>
            <person name="Hermle T."/>
            <person name="Jobst-Schwan T."/>
            <person name="Widmeier E."/>
            <person name="Majmundar A.J."/>
            <person name="Daga A."/>
            <person name="Warejko J.K."/>
            <person name="Nakayama M."/>
            <person name="Schapiro D."/>
            <person name="Chen J."/>
            <person name="Airik M."/>
            <person name="Rao J."/>
            <person name="Schmidt J.M."/>
            <person name="Hoogstraten C.A."/>
            <person name="Hugo H."/>
            <person name="Meena J."/>
            <person name="Lek M."/>
            <person name="Laricchia K.M."/>
            <person name="Bagga A."/>
            <person name="Hildebrandt F."/>
        </authorList>
    </citation>
    <scope>INVOLVEMENT IN GAMOS6</scope>
</reference>
<reference key="16">
    <citation type="journal article" date="2019" name="Mol. Cell">
        <title>Transcriptome-wide mapping of internal N7-methylguanosine methylome in mammalian mRNA.</title>
        <authorList>
            <person name="Zhang L.S."/>
            <person name="Liu C."/>
            <person name="Ma H."/>
            <person name="Dai Q."/>
            <person name="Sun H.L."/>
            <person name="Luo G."/>
            <person name="Zhang Z."/>
            <person name="Zhang L."/>
            <person name="Hu L."/>
            <person name="Dong X."/>
            <person name="He C."/>
        </authorList>
    </citation>
    <scope>FUNCTION</scope>
    <scope>PATHWAY</scope>
</reference>
<reference key="17">
    <citation type="journal article" date="2019" name="Mol. Cell">
        <title>METTL1 promotes let-7 microRNA processing via m7G methylation.</title>
        <authorList>
            <person name="Pandolfini L."/>
            <person name="Barbieri I."/>
            <person name="Bannister A.J."/>
            <person name="Hendrick A."/>
            <person name="Andrews B."/>
            <person name="Webster N."/>
            <person name="Murat P."/>
            <person name="Mach P."/>
            <person name="Brandi R."/>
            <person name="Robson S.C."/>
            <person name="Migliori V."/>
            <person name="Alendar A."/>
            <person name="d'Onofrio M."/>
            <person name="Balasubramanian S."/>
            <person name="Kouzarides T."/>
        </authorList>
    </citation>
    <scope>FUNCTION</scope>
</reference>
<reference key="18">
    <citation type="journal article" date="2021" name="Mol. Cell">
        <title>METTL1-mediated m7G modification of Arg-TCT tRNA drives oncogenic transformation.</title>
        <authorList>
            <person name="Orellana E.A."/>
            <person name="Liu Q."/>
            <person name="Yankova E."/>
            <person name="Pirouz M."/>
            <person name="De Braekeleer E."/>
            <person name="Zhang W."/>
            <person name="Lim J."/>
            <person name="Aspris D."/>
            <person name="Sendinc E."/>
            <person name="Garyfallos D.A."/>
            <person name="Gu M."/>
            <person name="Ali R."/>
            <person name="Gutierrez A."/>
            <person name="Mikutis S."/>
            <person name="Bernardes G.J.L."/>
            <person name="Fischer E.S."/>
            <person name="Bradley A."/>
            <person name="Vassiliou G.S."/>
            <person name="Slack F.J."/>
            <person name="Tzelepis K."/>
            <person name="Gregory R.I."/>
        </authorList>
    </citation>
    <scope>FUNCTION</scope>
    <scope>INDUCTION</scope>
</reference>
<reference key="19">
    <citation type="journal article" date="2021" name="Mol. Cell">
        <title>N7-Methylguanosine tRNA modification enhances oncogenic mRNA translation and promotes intrahepatic cholangiocarcinoma progression.</title>
        <authorList>
            <person name="Dai Z."/>
            <person name="Liu H."/>
            <person name="Liao J."/>
            <person name="Huang C."/>
            <person name="Ren X."/>
            <person name="Zhu W."/>
            <person name="Zhu S."/>
            <person name="Peng B."/>
            <person name="Li S."/>
            <person name="Lai J."/>
            <person name="Liang L."/>
            <person name="Xu L."/>
            <person name="Peng S."/>
            <person name="Lin S."/>
            <person name="Kuang M."/>
        </authorList>
    </citation>
    <scope>FUNCTION</scope>
    <scope>INDUCTION</scope>
</reference>
<reference key="20">
    <citation type="journal article" date="2021" name="Mol. Ther.">
        <title>METTL1/WDR4-mediated m7G tRNA modifications and m7G codon usage promote mRNA translation and lung cancer progression.</title>
        <authorList>
            <person name="Ma J."/>
            <person name="Han H."/>
            <person name="Huang Y."/>
            <person name="Yang C."/>
            <person name="Zheng S."/>
            <person name="Cai T."/>
            <person name="Bi J."/>
            <person name="Huang X."/>
            <person name="Liu R."/>
            <person name="Huang L."/>
            <person name="Luo Y."/>
            <person name="Li W."/>
            <person name="Lin S."/>
        </authorList>
    </citation>
    <scope>INDUCTION</scope>
</reference>
<reference key="21">
    <citation type="journal article" date="2023" name="Cell">
        <title>QKI shuttles internal m7G-modified transcripts into stress granules and modulates mRNA metabolism.</title>
        <authorList>
            <person name="Zhao Z."/>
            <person name="Qing Y."/>
            <person name="Dong L."/>
            <person name="Han L."/>
            <person name="Wu D."/>
            <person name="Li Y."/>
            <person name="Li W."/>
            <person name="Xue J."/>
            <person name="Zhou K."/>
            <person name="Sun M."/>
            <person name="Tan B."/>
            <person name="Chen Z."/>
            <person name="Shen C."/>
            <person name="Gao L."/>
            <person name="Small A."/>
            <person name="Wang K."/>
            <person name="Leung K."/>
            <person name="Zhang Z."/>
            <person name="Qin X."/>
            <person name="Deng X."/>
            <person name="Xia Q."/>
            <person name="Su R."/>
            <person name="Chen J."/>
        </authorList>
    </citation>
    <scope>FUNCTION</scope>
    <scope>INTERACTION WITH METTL1</scope>
</reference>
<reference key="22">
    <citation type="journal article" date="2023" name="Cell Discov.">
        <title>Structural insight into how WDR4 promotes the tRNA N7-methylguanosine methyltransferase activity of METTL1.</title>
        <authorList>
            <person name="Jin X."/>
            <person name="Guan Z."/>
            <person name="Hu N."/>
            <person name="He C."/>
            <person name="Yin P."/>
            <person name="Gong Z."/>
            <person name="Zhang D."/>
        </authorList>
    </citation>
    <scope>X-RAY CRYSTALLOGRAPHY (1.80 ANGSTROMS) OF 30-265 IN COMPLEX WITH METTL1</scope>
    <scope>FUNCTION</scope>
    <scope>PATHWAY</scope>
    <scope>INTERACTION WITH METTL1</scope>
    <scope>CHARACTERIZATION OF VARIANT GAMOS6 GLN-170</scope>
    <scope>CHARACTERIZATION OF VARIANT MIGSB LEU-170</scope>
</reference>
<reference key="23">
    <citation type="journal article" date="2023" name="Nature">
        <title>Structures and mechanisms of tRNA methylation by METTL1-WDR4.</title>
        <authorList>
            <person name="Ruiz-Arroyo V.M."/>
            <person name="Raj R."/>
            <person name="Babu K."/>
            <person name="Onolbaatar O."/>
            <person name="Roberts P.H."/>
            <person name="Nam Y."/>
        </authorList>
    </citation>
    <scope>X-RAY CRYSTALLOGRAPHY (1.93 ANGSTROMS) OF 1-389 IN COMPLEX WITH METTL1</scope>
    <scope>STRUCTURE BY ELECTRON MICROSCOPY (3.53 ANGSTROMS) OF 1-389 IN COMPLEX WITH METTL1 AND TRNA</scope>
    <scope>FUNCTION</scope>
    <scope>PATHWAY</scope>
    <scope>INTERACTION WITH METTL1</scope>
    <scope>MUTAGENESIS OF LYS-83; ARG-103; ARG-104; MET-147; ARG-165; GLU-167; ARG-170; PHE-365 AND TYR-371</scope>
</reference>
<reference key="24">
    <citation type="journal article" date="2023" name="Nature">
        <title>Structural basis of regulated m7G tRNA modification by METTL1-WDR4.</title>
        <authorList>
            <person name="Li J."/>
            <person name="Wang L."/>
            <person name="Hahn Q."/>
            <person name="Nowak R.P."/>
            <person name="Viennet T."/>
            <person name="Orellana E.A."/>
            <person name="Roy Burman S.S."/>
            <person name="Yue H."/>
            <person name="Hunkeler M."/>
            <person name="Fontana P."/>
            <person name="Wu H."/>
            <person name="Arthanari H."/>
            <person name="Fischer E.S."/>
            <person name="Gregory R.I."/>
        </authorList>
    </citation>
    <scope>X-RAY CRYSTALLOGRAPHY (3.1 ANGSTROMS) IN COMPLEX WITH METTL1 AND TRNA</scope>
    <scope>STRUCTURE BY ELECTRON MICROSCOPY (3.3 ANGSTROMS) IN COMPLEX WITH METTL1 AND TRNA</scope>
    <scope>FUNCTION</scope>
    <scope>PATHWAY</scope>
    <scope>INTERACTION WITH METTL1</scope>
    <scope>MUTAGENESIS OF LYS-83; 103-ARG-ARG-104; ARG-103; ARG-104; LYS-122; ARG-165; ASP-166 AND GLU-167</scope>
    <scope>VARIANT PRO-144</scope>
    <scope>VARIANT GAMOS6 GLN-170</scope>
    <scope>CHARACTERIZATION OF VARIANT PRO-144</scope>
    <scope>CHARACTERIZATION OF VARIANT GAMOS6 GLN-170</scope>
</reference>
<reference key="25">
    <citation type="journal article" date="2015" name="Genome Biol.">
        <title>Mutation in WDR4 impairs tRNA m(7)G46 methylation and causes a distinct form of microcephalic primordial dwarfism.</title>
        <authorList>
            <person name="Shaheen R."/>
            <person name="Abdel-Salam G.M."/>
            <person name="Guy M.P."/>
            <person name="Alomar R."/>
            <person name="Abdel-Hamid M.S."/>
            <person name="Afifi H.H."/>
            <person name="Ismail S.I."/>
            <person name="Emam B.A."/>
            <person name="Phizicky E.M."/>
            <person name="Alkuraya F.S."/>
        </authorList>
    </citation>
    <scope>VARIANT MIGSB LEU-170</scope>
</reference>
<reference key="26">
    <citation type="journal article" date="2018" name="Eur. J. Med. Genet.">
        <title>Speech and language delay in a patient with WDR4 mutations.</title>
        <authorList>
            <person name="Chen X."/>
            <person name="Gao Y."/>
            <person name="Yang L."/>
            <person name="Wu B."/>
            <person name="Dong X."/>
            <person name="Liu B."/>
            <person name="Lu Y."/>
            <person name="Zhou W."/>
            <person name="Wang H."/>
        </authorList>
    </citation>
    <scope>VARIANT GAMOS6 ALA-164</scope>
</reference>
<reference key="27">
    <citation type="journal article" date="2018" name="Clin. Genet.">
        <title>Further delineation of the phenotype caused by biallelic variants in the WDR4 gene.</title>
        <authorList>
            <person name="Trimouille A."/>
            <person name="Lasseaux E."/>
            <person name="Barat P."/>
            <person name="Deiller C."/>
            <person name="Drunat S."/>
            <person name="Rooryck C."/>
            <person name="Arveiler B."/>
            <person name="Lacombe D."/>
        </authorList>
    </citation>
    <scope>VARIANT GAMOS6 GLN-170</scope>
</reference>
<sequence>MAGSVGLALCGQTLVVRGGSRFLATSIASSDDDSLFIYDCSAAEKKSQENKGEDAPLDQGSGAILASTFSKSGSYFALTDDSKRLILFRTKPWQCLSVRTVARRCTALTFIASEEKVLVADKSGDVYSFSVLEPHGCGRLELGHLSMLLDVAVSPDDRFILTADRDEKIRVSWAAAPHSIESFCLGHTEFVSRISVVPTQPGLLLSSSGDGTLRLWEYRSGRQLHCCHLASLQELVDPQAPQKFAASRIAFWCQENCVALLCDGTPVVYIFQLDARRQQLVYRQQLAFQHQVWDVAFEETQGLWVLQDCQEAPLVLYRPVGDQWQSVPESTVLKKVSGVLRGNWAMLEGSAGADASFSSLYKATFDNVTSYLKKKEERLQQQLEKKQRRRSPPPGPDGHAKKMRPGEATLSC</sequence>
<gene>
    <name evidence="1 23 28" type="primary">WDR4</name>
</gene>
<name>WDR4_HUMAN</name>